<comment type="similarity">
    <text evidence="2">Belongs to the eukaryotic ribosomal protein eL43 family.</text>
</comment>
<comment type="sequence caution" evidence="2">
    <conflict type="erroneous gene model prediction">
        <sequence resource="EMBL-CDS" id="CAB87861"/>
    </conflict>
    <text>The predicted gene At3g60245 has been split into 2 genes: At3g60240 and At3g60245.</text>
</comment>
<gene>
    <name type="primary">RPL37AC</name>
    <name type="ordered locus">At3g60245</name>
    <name type="ORF">F27H5.3</name>
</gene>
<keyword id="KW-0479">Metal-binding</keyword>
<keyword id="KW-1185">Reference proteome</keyword>
<keyword id="KW-0687">Ribonucleoprotein</keyword>
<keyword id="KW-0689">Ribosomal protein</keyword>
<keyword id="KW-0862">Zinc</keyword>
<keyword id="KW-0863">Zinc-finger</keyword>
<evidence type="ECO:0000303" key="1">
    <source>
    </source>
</evidence>
<evidence type="ECO:0000305" key="2"/>
<sequence>MAKRTKKVGIVGKYGTRYGASIRKQIKKMEVSQHSKYFCEFCGKYGVKRKAVGIWGCKDCGKVKAGGAYTMNTASAVTVRSTIRRLREQIEG</sequence>
<protein>
    <recommendedName>
        <fullName evidence="1">Large ribosomal subunit protein eL43y</fullName>
    </recommendedName>
    <alternativeName>
        <fullName>60S ribosomal protein L37a-2</fullName>
    </alternativeName>
</protein>
<name>R37A2_ARATH</name>
<dbReference type="EMBL" id="AL163852">
    <property type="protein sequence ID" value="CAB87861.1"/>
    <property type="status" value="ALT_SEQ"/>
    <property type="molecule type" value="Genomic_DNA"/>
</dbReference>
<dbReference type="EMBL" id="CP002686">
    <property type="protein sequence ID" value="AEE80029.1"/>
    <property type="molecule type" value="Genomic_DNA"/>
</dbReference>
<dbReference type="EMBL" id="AY117196">
    <property type="protein sequence ID" value="AAM51271.1"/>
    <property type="molecule type" value="mRNA"/>
</dbReference>
<dbReference type="EMBL" id="AY080669">
    <property type="protein sequence ID" value="AAL86345.1"/>
    <property type="molecule type" value="mRNA"/>
</dbReference>
<dbReference type="EMBL" id="AY088178">
    <property type="protein sequence ID" value="AAM65721.1"/>
    <property type="molecule type" value="mRNA"/>
</dbReference>
<dbReference type="PIR" id="T49219">
    <property type="entry name" value="T49219"/>
</dbReference>
<dbReference type="RefSeq" id="NP_567096.1">
    <property type="nucleotide sequence ID" value="NM_115888.3"/>
</dbReference>
<dbReference type="SMR" id="Q8RXU5"/>
<dbReference type="BioGRID" id="10509">
    <property type="interactions" value="112"/>
</dbReference>
<dbReference type="FunCoup" id="Q8RXU5">
    <property type="interactions" value="2537"/>
</dbReference>
<dbReference type="STRING" id="3702.Q8RXU5"/>
<dbReference type="GlyGen" id="Q8RXU5">
    <property type="glycosylation" value="1 site"/>
</dbReference>
<dbReference type="MetOSite" id="Q8RXU5"/>
<dbReference type="PaxDb" id="3702-AT3G60245.1"/>
<dbReference type="ProteomicsDB" id="236606"/>
<dbReference type="EnsemblPlants" id="AT3G60245.1">
    <property type="protein sequence ID" value="AT3G60245.1"/>
    <property type="gene ID" value="AT3G60245"/>
</dbReference>
<dbReference type="GeneID" id="825195"/>
<dbReference type="Gramene" id="AT3G60245.1">
    <property type="protein sequence ID" value="AT3G60245.1"/>
    <property type="gene ID" value="AT3G60245"/>
</dbReference>
<dbReference type="KEGG" id="ath:AT3G60245"/>
<dbReference type="Araport" id="AT3G60245"/>
<dbReference type="TAIR" id="AT3G60245"/>
<dbReference type="eggNOG" id="KOG0402">
    <property type="taxonomic scope" value="Eukaryota"/>
</dbReference>
<dbReference type="HOGENOM" id="CLU_141199_1_0_1"/>
<dbReference type="InParanoid" id="Q8RXU5"/>
<dbReference type="OMA" id="KXTTSAV"/>
<dbReference type="OrthoDB" id="1845545at2759"/>
<dbReference type="PhylomeDB" id="Q8RXU5"/>
<dbReference type="CD-CODE" id="4299E36E">
    <property type="entry name" value="Nucleolus"/>
</dbReference>
<dbReference type="PRO" id="PR:Q8RXU5"/>
<dbReference type="Proteomes" id="UP000006548">
    <property type="component" value="Chromosome 3"/>
</dbReference>
<dbReference type="ExpressionAtlas" id="Q8RXU5">
    <property type="expression patterns" value="baseline and differential"/>
</dbReference>
<dbReference type="GO" id="GO:0005829">
    <property type="term" value="C:cytosol"/>
    <property type="evidence" value="ECO:0007005"/>
    <property type="project" value="TAIR"/>
</dbReference>
<dbReference type="GO" id="GO:0022625">
    <property type="term" value="C:cytosolic large ribosomal subunit"/>
    <property type="evidence" value="ECO:0007005"/>
    <property type="project" value="TAIR"/>
</dbReference>
<dbReference type="GO" id="GO:0003735">
    <property type="term" value="F:structural constituent of ribosome"/>
    <property type="evidence" value="ECO:0000314"/>
    <property type="project" value="CAFA"/>
</dbReference>
<dbReference type="GO" id="GO:0008270">
    <property type="term" value="F:zinc ion binding"/>
    <property type="evidence" value="ECO:0007669"/>
    <property type="project" value="UniProtKB-KW"/>
</dbReference>
<dbReference type="GO" id="GO:0006412">
    <property type="term" value="P:translation"/>
    <property type="evidence" value="ECO:0007669"/>
    <property type="project" value="InterPro"/>
</dbReference>
<dbReference type="FunFam" id="2.20.25.30:FF:000002">
    <property type="entry name" value="60S ribosomal protein L37a"/>
    <property type="match status" value="1"/>
</dbReference>
<dbReference type="Gene3D" id="2.20.25.30">
    <property type="match status" value="1"/>
</dbReference>
<dbReference type="HAMAP" id="MF_00327">
    <property type="entry name" value="Ribosomal_eL43"/>
    <property type="match status" value="1"/>
</dbReference>
<dbReference type="InterPro" id="IPR011331">
    <property type="entry name" value="Ribosomal_eL37/eL43"/>
</dbReference>
<dbReference type="InterPro" id="IPR002674">
    <property type="entry name" value="Ribosomal_eL43"/>
</dbReference>
<dbReference type="InterPro" id="IPR050522">
    <property type="entry name" value="Ribosomal_protein_eL43"/>
</dbReference>
<dbReference type="InterPro" id="IPR011332">
    <property type="entry name" value="Ribosomal_zn-bd"/>
</dbReference>
<dbReference type="NCBIfam" id="TIGR00280">
    <property type="entry name" value="eL43_euk_arch"/>
    <property type="match status" value="1"/>
</dbReference>
<dbReference type="NCBIfam" id="NF003058">
    <property type="entry name" value="PRK03976.1"/>
    <property type="match status" value="1"/>
</dbReference>
<dbReference type="PANTHER" id="PTHR48129">
    <property type="entry name" value="60S RIBOSOMAL PROTEIN L37A"/>
    <property type="match status" value="1"/>
</dbReference>
<dbReference type="PANTHER" id="PTHR48129:SF1">
    <property type="entry name" value="LARGE RIBOSOMAL SUBUNIT PROTEIN EL43"/>
    <property type="match status" value="1"/>
</dbReference>
<dbReference type="Pfam" id="PF01780">
    <property type="entry name" value="Ribosomal_L37ae"/>
    <property type="match status" value="1"/>
</dbReference>
<dbReference type="SUPFAM" id="SSF57829">
    <property type="entry name" value="Zn-binding ribosomal proteins"/>
    <property type="match status" value="1"/>
</dbReference>
<organism>
    <name type="scientific">Arabidopsis thaliana</name>
    <name type="common">Mouse-ear cress</name>
    <dbReference type="NCBI Taxonomy" id="3702"/>
    <lineage>
        <taxon>Eukaryota</taxon>
        <taxon>Viridiplantae</taxon>
        <taxon>Streptophyta</taxon>
        <taxon>Embryophyta</taxon>
        <taxon>Tracheophyta</taxon>
        <taxon>Spermatophyta</taxon>
        <taxon>Magnoliopsida</taxon>
        <taxon>eudicotyledons</taxon>
        <taxon>Gunneridae</taxon>
        <taxon>Pentapetalae</taxon>
        <taxon>rosids</taxon>
        <taxon>malvids</taxon>
        <taxon>Brassicales</taxon>
        <taxon>Brassicaceae</taxon>
        <taxon>Camelineae</taxon>
        <taxon>Arabidopsis</taxon>
    </lineage>
</organism>
<feature type="chain" id="PRO_0000245496" description="Large ribosomal subunit protein eL43y">
    <location>
        <begin position="1"/>
        <end position="92"/>
    </location>
</feature>
<feature type="zinc finger region" description="C4-type">
    <location>
        <begin position="39"/>
        <end position="60"/>
    </location>
</feature>
<proteinExistence type="inferred from homology"/>
<accession>Q8RXU5</accession>
<accession>Q9LY39</accession>
<reference key="1">
    <citation type="journal article" date="2000" name="Nature">
        <title>Sequence and analysis of chromosome 3 of the plant Arabidopsis thaliana.</title>
        <authorList>
            <person name="Salanoubat M."/>
            <person name="Lemcke K."/>
            <person name="Rieger M."/>
            <person name="Ansorge W."/>
            <person name="Unseld M."/>
            <person name="Fartmann B."/>
            <person name="Valle G."/>
            <person name="Bloecker H."/>
            <person name="Perez-Alonso M."/>
            <person name="Obermaier B."/>
            <person name="Delseny M."/>
            <person name="Boutry M."/>
            <person name="Grivell L.A."/>
            <person name="Mache R."/>
            <person name="Puigdomenech P."/>
            <person name="De Simone V."/>
            <person name="Choisne N."/>
            <person name="Artiguenave F."/>
            <person name="Robert C."/>
            <person name="Brottier P."/>
            <person name="Wincker P."/>
            <person name="Cattolico L."/>
            <person name="Weissenbach J."/>
            <person name="Saurin W."/>
            <person name="Quetier F."/>
            <person name="Schaefer M."/>
            <person name="Mueller-Auer S."/>
            <person name="Gabel C."/>
            <person name="Fuchs M."/>
            <person name="Benes V."/>
            <person name="Wurmbach E."/>
            <person name="Drzonek H."/>
            <person name="Erfle H."/>
            <person name="Jordan N."/>
            <person name="Bangert S."/>
            <person name="Wiedelmann R."/>
            <person name="Kranz H."/>
            <person name="Voss H."/>
            <person name="Holland R."/>
            <person name="Brandt P."/>
            <person name="Nyakatura G."/>
            <person name="Vezzi A."/>
            <person name="D'Angelo M."/>
            <person name="Pallavicini A."/>
            <person name="Toppo S."/>
            <person name="Simionati B."/>
            <person name="Conrad A."/>
            <person name="Hornischer K."/>
            <person name="Kauer G."/>
            <person name="Loehnert T.-H."/>
            <person name="Nordsiek G."/>
            <person name="Reichelt J."/>
            <person name="Scharfe M."/>
            <person name="Schoen O."/>
            <person name="Bargues M."/>
            <person name="Terol J."/>
            <person name="Climent J."/>
            <person name="Navarro P."/>
            <person name="Collado C."/>
            <person name="Perez-Perez A."/>
            <person name="Ottenwaelder B."/>
            <person name="Duchemin D."/>
            <person name="Cooke R."/>
            <person name="Laudie M."/>
            <person name="Berger-Llauro C."/>
            <person name="Purnelle B."/>
            <person name="Masuy D."/>
            <person name="de Haan M."/>
            <person name="Maarse A.C."/>
            <person name="Alcaraz J.-P."/>
            <person name="Cottet A."/>
            <person name="Casacuberta E."/>
            <person name="Monfort A."/>
            <person name="Argiriou A."/>
            <person name="Flores M."/>
            <person name="Liguori R."/>
            <person name="Vitale D."/>
            <person name="Mannhaupt G."/>
            <person name="Haase D."/>
            <person name="Schoof H."/>
            <person name="Rudd S."/>
            <person name="Zaccaria P."/>
            <person name="Mewes H.-W."/>
            <person name="Mayer K.F.X."/>
            <person name="Kaul S."/>
            <person name="Town C.D."/>
            <person name="Koo H.L."/>
            <person name="Tallon L.J."/>
            <person name="Jenkins J."/>
            <person name="Rooney T."/>
            <person name="Rizzo M."/>
            <person name="Walts A."/>
            <person name="Utterback T."/>
            <person name="Fujii C.Y."/>
            <person name="Shea T.P."/>
            <person name="Creasy T.H."/>
            <person name="Haas B."/>
            <person name="Maiti R."/>
            <person name="Wu D."/>
            <person name="Peterson J."/>
            <person name="Van Aken S."/>
            <person name="Pai G."/>
            <person name="Militscher J."/>
            <person name="Sellers P."/>
            <person name="Gill J.E."/>
            <person name="Feldblyum T.V."/>
            <person name="Preuss D."/>
            <person name="Lin X."/>
            <person name="Nierman W.C."/>
            <person name="Salzberg S.L."/>
            <person name="White O."/>
            <person name="Venter J.C."/>
            <person name="Fraser C.M."/>
            <person name="Kaneko T."/>
            <person name="Nakamura Y."/>
            <person name="Sato S."/>
            <person name="Kato T."/>
            <person name="Asamizu E."/>
            <person name="Sasamoto S."/>
            <person name="Kimura T."/>
            <person name="Idesawa K."/>
            <person name="Kawashima K."/>
            <person name="Kishida Y."/>
            <person name="Kiyokawa C."/>
            <person name="Kohara M."/>
            <person name="Matsumoto M."/>
            <person name="Matsuno A."/>
            <person name="Muraki A."/>
            <person name="Nakayama S."/>
            <person name="Nakazaki N."/>
            <person name="Shinpo S."/>
            <person name="Takeuchi C."/>
            <person name="Wada T."/>
            <person name="Watanabe A."/>
            <person name="Yamada M."/>
            <person name="Yasuda M."/>
            <person name="Tabata S."/>
        </authorList>
    </citation>
    <scope>NUCLEOTIDE SEQUENCE [LARGE SCALE GENOMIC DNA]</scope>
    <source>
        <strain>cv. Columbia</strain>
    </source>
</reference>
<reference key="2">
    <citation type="journal article" date="2017" name="Plant J.">
        <title>Araport11: a complete reannotation of the Arabidopsis thaliana reference genome.</title>
        <authorList>
            <person name="Cheng C.Y."/>
            <person name="Krishnakumar V."/>
            <person name="Chan A.P."/>
            <person name="Thibaud-Nissen F."/>
            <person name="Schobel S."/>
            <person name="Town C.D."/>
        </authorList>
    </citation>
    <scope>GENOME REANNOTATION</scope>
    <source>
        <strain>cv. Columbia</strain>
    </source>
</reference>
<reference key="3">
    <citation type="journal article" date="2003" name="Science">
        <title>Empirical analysis of transcriptional activity in the Arabidopsis genome.</title>
        <authorList>
            <person name="Yamada K."/>
            <person name="Lim J."/>
            <person name="Dale J.M."/>
            <person name="Chen H."/>
            <person name="Shinn P."/>
            <person name="Palm C.J."/>
            <person name="Southwick A.M."/>
            <person name="Wu H.C."/>
            <person name="Kim C.J."/>
            <person name="Nguyen M."/>
            <person name="Pham P.K."/>
            <person name="Cheuk R.F."/>
            <person name="Karlin-Newmann G."/>
            <person name="Liu S.X."/>
            <person name="Lam B."/>
            <person name="Sakano H."/>
            <person name="Wu T."/>
            <person name="Yu G."/>
            <person name="Miranda M."/>
            <person name="Quach H.L."/>
            <person name="Tripp M."/>
            <person name="Chang C.H."/>
            <person name="Lee J.M."/>
            <person name="Toriumi M.J."/>
            <person name="Chan M.M."/>
            <person name="Tang C.C."/>
            <person name="Onodera C.S."/>
            <person name="Deng J.M."/>
            <person name="Akiyama K."/>
            <person name="Ansari Y."/>
            <person name="Arakawa T."/>
            <person name="Banh J."/>
            <person name="Banno F."/>
            <person name="Bowser L."/>
            <person name="Brooks S.Y."/>
            <person name="Carninci P."/>
            <person name="Chao Q."/>
            <person name="Choy N."/>
            <person name="Enju A."/>
            <person name="Goldsmith A.D."/>
            <person name="Gurjal M."/>
            <person name="Hansen N.F."/>
            <person name="Hayashizaki Y."/>
            <person name="Johnson-Hopson C."/>
            <person name="Hsuan V.W."/>
            <person name="Iida K."/>
            <person name="Karnes M."/>
            <person name="Khan S."/>
            <person name="Koesema E."/>
            <person name="Ishida J."/>
            <person name="Jiang P.X."/>
            <person name="Jones T."/>
            <person name="Kawai J."/>
            <person name="Kamiya A."/>
            <person name="Meyers C."/>
            <person name="Nakajima M."/>
            <person name="Narusaka M."/>
            <person name="Seki M."/>
            <person name="Sakurai T."/>
            <person name="Satou M."/>
            <person name="Tamse R."/>
            <person name="Vaysberg M."/>
            <person name="Wallender E.K."/>
            <person name="Wong C."/>
            <person name="Yamamura Y."/>
            <person name="Yuan S."/>
            <person name="Shinozaki K."/>
            <person name="Davis R.W."/>
            <person name="Theologis A."/>
            <person name="Ecker J.R."/>
        </authorList>
    </citation>
    <scope>NUCLEOTIDE SEQUENCE [LARGE SCALE MRNA]</scope>
    <source>
        <strain>cv. Columbia</strain>
    </source>
</reference>
<reference key="4">
    <citation type="submission" date="2002-03" db="EMBL/GenBank/DDBJ databases">
        <title>Full-length cDNA from Arabidopsis thaliana.</title>
        <authorList>
            <person name="Brover V.V."/>
            <person name="Troukhan M.E."/>
            <person name="Alexandrov N.A."/>
            <person name="Lu Y.-P."/>
            <person name="Flavell R.B."/>
            <person name="Feldmann K.A."/>
        </authorList>
    </citation>
    <scope>NUCLEOTIDE SEQUENCE [LARGE SCALE MRNA]</scope>
</reference>
<reference key="5">
    <citation type="journal article" date="2001" name="Plant Physiol.">
        <title>The organization of cytoplasmic ribosomal protein genes in the Arabidopsis genome.</title>
        <authorList>
            <person name="Barakat A."/>
            <person name="Szick-Miranda K."/>
            <person name="Chang I.-F."/>
            <person name="Guyot R."/>
            <person name="Blanc G."/>
            <person name="Cooke R."/>
            <person name="Delseny M."/>
            <person name="Bailey-Serres J."/>
        </authorList>
    </citation>
    <scope>GENE FAMILY ORGANIZATION</scope>
    <scope>NOMENCLATURE</scope>
</reference>
<reference key="6">
    <citation type="journal article" date="2023" name="Plant Cell">
        <title>An updated nomenclature for plant ribosomal protein genes.</title>
        <authorList>
            <person name="Scarpin M.R."/>
            <person name="Busche M."/>
            <person name="Martinez R.E."/>
            <person name="Harper L.C."/>
            <person name="Reiser L."/>
            <person name="Szakonyi D."/>
            <person name="Merchante C."/>
            <person name="Lan T."/>
            <person name="Xiong W."/>
            <person name="Mo B."/>
            <person name="Tang G."/>
            <person name="Chen X."/>
            <person name="Bailey-Serres J."/>
            <person name="Browning K.S."/>
            <person name="Brunkard J.O."/>
        </authorList>
    </citation>
    <scope>NOMENCLATURE</scope>
</reference>